<name>NADK_HELPJ</name>
<accession>Q9ZJ81</accession>
<feature type="chain" id="PRO_0000120624" description="NAD kinase">
    <location>
        <begin position="1"/>
        <end position="284"/>
    </location>
</feature>
<feature type="active site" description="Proton acceptor" evidence="1">
    <location>
        <position position="70"/>
    </location>
</feature>
<feature type="binding site" evidence="1">
    <location>
        <begin position="70"/>
        <end position="71"/>
    </location>
    <ligand>
        <name>NAD(+)</name>
        <dbReference type="ChEBI" id="CHEBI:57540"/>
    </ligand>
</feature>
<feature type="binding site" evidence="1">
    <location>
        <begin position="139"/>
        <end position="140"/>
    </location>
    <ligand>
        <name>NAD(+)</name>
        <dbReference type="ChEBI" id="CHEBI:57540"/>
    </ligand>
</feature>
<feature type="binding site" evidence="1">
    <location>
        <position position="167"/>
    </location>
    <ligand>
        <name>NAD(+)</name>
        <dbReference type="ChEBI" id="CHEBI:57540"/>
    </ligand>
</feature>
<feature type="binding site" evidence="1">
    <location>
        <position position="169"/>
    </location>
    <ligand>
        <name>NAD(+)</name>
        <dbReference type="ChEBI" id="CHEBI:57540"/>
    </ligand>
</feature>
<feature type="binding site" evidence="1">
    <location>
        <position position="177"/>
    </location>
    <ligand>
        <name>NAD(+)</name>
        <dbReference type="ChEBI" id="CHEBI:57540"/>
    </ligand>
</feature>
<feature type="binding site" evidence="1">
    <location>
        <begin position="180"/>
        <end position="185"/>
    </location>
    <ligand>
        <name>NAD(+)</name>
        <dbReference type="ChEBI" id="CHEBI:57540"/>
    </ligand>
</feature>
<feature type="binding site" evidence="1">
    <location>
        <position position="236"/>
    </location>
    <ligand>
        <name>NAD(+)</name>
        <dbReference type="ChEBI" id="CHEBI:57540"/>
    </ligand>
</feature>
<reference key="1">
    <citation type="journal article" date="1999" name="Nature">
        <title>Genomic sequence comparison of two unrelated isolates of the human gastric pathogen Helicobacter pylori.</title>
        <authorList>
            <person name="Alm R.A."/>
            <person name="Ling L.-S.L."/>
            <person name="Moir D.T."/>
            <person name="King B.L."/>
            <person name="Brown E.D."/>
            <person name="Doig P.C."/>
            <person name="Smith D.R."/>
            <person name="Noonan B."/>
            <person name="Guild B.C."/>
            <person name="deJonge B.L."/>
            <person name="Carmel G."/>
            <person name="Tummino P.J."/>
            <person name="Caruso A."/>
            <person name="Uria-Nickelsen M."/>
            <person name="Mills D.M."/>
            <person name="Ives C."/>
            <person name="Gibson R."/>
            <person name="Merberg D."/>
            <person name="Mills S.D."/>
            <person name="Jiang Q."/>
            <person name="Taylor D.E."/>
            <person name="Vovis G.F."/>
            <person name="Trust T.J."/>
        </authorList>
    </citation>
    <scope>NUCLEOTIDE SEQUENCE [LARGE SCALE GENOMIC DNA]</scope>
    <source>
        <strain>J99 / ATCC 700824</strain>
    </source>
</reference>
<dbReference type="EC" id="2.7.1.23" evidence="1"/>
<dbReference type="EMBL" id="AE001439">
    <property type="protein sequence ID" value="AAD07009.1"/>
    <property type="status" value="ALT_INIT"/>
    <property type="molecule type" value="Genomic_DNA"/>
</dbReference>
<dbReference type="PIR" id="A71807">
    <property type="entry name" value="A71807"/>
</dbReference>
<dbReference type="SMR" id="Q9ZJ81"/>
<dbReference type="KEGG" id="hpj:jhp_1433"/>
<dbReference type="PATRIC" id="fig|85963.30.peg.1111"/>
<dbReference type="eggNOG" id="COG0061">
    <property type="taxonomic scope" value="Bacteria"/>
</dbReference>
<dbReference type="Proteomes" id="UP000000804">
    <property type="component" value="Chromosome"/>
</dbReference>
<dbReference type="GO" id="GO:0005737">
    <property type="term" value="C:cytoplasm"/>
    <property type="evidence" value="ECO:0007669"/>
    <property type="project" value="UniProtKB-SubCell"/>
</dbReference>
<dbReference type="GO" id="GO:0005524">
    <property type="term" value="F:ATP binding"/>
    <property type="evidence" value="ECO:0007669"/>
    <property type="project" value="UniProtKB-KW"/>
</dbReference>
<dbReference type="GO" id="GO:0046872">
    <property type="term" value="F:metal ion binding"/>
    <property type="evidence" value="ECO:0007669"/>
    <property type="project" value="UniProtKB-UniRule"/>
</dbReference>
<dbReference type="GO" id="GO:0051287">
    <property type="term" value="F:NAD binding"/>
    <property type="evidence" value="ECO:0007669"/>
    <property type="project" value="UniProtKB-ARBA"/>
</dbReference>
<dbReference type="GO" id="GO:0003951">
    <property type="term" value="F:NAD+ kinase activity"/>
    <property type="evidence" value="ECO:0007669"/>
    <property type="project" value="UniProtKB-UniRule"/>
</dbReference>
<dbReference type="GO" id="GO:0019674">
    <property type="term" value="P:NAD metabolic process"/>
    <property type="evidence" value="ECO:0007669"/>
    <property type="project" value="InterPro"/>
</dbReference>
<dbReference type="GO" id="GO:0006741">
    <property type="term" value="P:NADP biosynthetic process"/>
    <property type="evidence" value="ECO:0007669"/>
    <property type="project" value="UniProtKB-UniRule"/>
</dbReference>
<dbReference type="Gene3D" id="3.40.50.10330">
    <property type="entry name" value="Probable inorganic polyphosphate/atp-NAD kinase, domain 1"/>
    <property type="match status" value="1"/>
</dbReference>
<dbReference type="Gene3D" id="2.60.200.30">
    <property type="entry name" value="Probable inorganic polyphosphate/atp-NAD kinase, domain 2"/>
    <property type="match status" value="1"/>
</dbReference>
<dbReference type="HAMAP" id="MF_00361">
    <property type="entry name" value="NAD_kinase"/>
    <property type="match status" value="1"/>
</dbReference>
<dbReference type="InterPro" id="IPR017438">
    <property type="entry name" value="ATP-NAD_kinase_N"/>
</dbReference>
<dbReference type="InterPro" id="IPR017437">
    <property type="entry name" value="ATP-NAD_kinase_PpnK-typ_C"/>
</dbReference>
<dbReference type="InterPro" id="IPR016064">
    <property type="entry name" value="NAD/diacylglycerol_kinase_sf"/>
</dbReference>
<dbReference type="InterPro" id="IPR002504">
    <property type="entry name" value="NADK"/>
</dbReference>
<dbReference type="PANTHER" id="PTHR20275">
    <property type="entry name" value="NAD KINASE"/>
    <property type="match status" value="1"/>
</dbReference>
<dbReference type="PANTHER" id="PTHR20275:SF0">
    <property type="entry name" value="NAD KINASE"/>
    <property type="match status" value="1"/>
</dbReference>
<dbReference type="Pfam" id="PF01513">
    <property type="entry name" value="NAD_kinase"/>
    <property type="match status" value="1"/>
</dbReference>
<dbReference type="Pfam" id="PF20143">
    <property type="entry name" value="NAD_kinase_C"/>
    <property type="match status" value="1"/>
</dbReference>
<dbReference type="SUPFAM" id="SSF111331">
    <property type="entry name" value="NAD kinase/diacylglycerol kinase-like"/>
    <property type="match status" value="1"/>
</dbReference>
<organism>
    <name type="scientific">Helicobacter pylori (strain J99 / ATCC 700824)</name>
    <name type="common">Campylobacter pylori J99</name>
    <dbReference type="NCBI Taxonomy" id="85963"/>
    <lineage>
        <taxon>Bacteria</taxon>
        <taxon>Pseudomonadati</taxon>
        <taxon>Campylobacterota</taxon>
        <taxon>Epsilonproteobacteria</taxon>
        <taxon>Campylobacterales</taxon>
        <taxon>Helicobacteraceae</taxon>
        <taxon>Helicobacter</taxon>
    </lineage>
</organism>
<evidence type="ECO:0000255" key="1">
    <source>
        <dbReference type="HAMAP-Rule" id="MF_00361"/>
    </source>
</evidence>
<evidence type="ECO:0000305" key="2"/>
<proteinExistence type="inferred from homology"/>
<comment type="function">
    <text evidence="1">Involved in the regulation of the intracellular balance of NAD and NADP, and is a key enzyme in the biosynthesis of NADP. Catalyzes specifically the phosphorylation on 2'-hydroxyl of the adenosine moiety of NAD to yield NADP.</text>
</comment>
<comment type="catalytic activity">
    <reaction evidence="1">
        <text>NAD(+) + ATP = ADP + NADP(+) + H(+)</text>
        <dbReference type="Rhea" id="RHEA:18629"/>
        <dbReference type="ChEBI" id="CHEBI:15378"/>
        <dbReference type="ChEBI" id="CHEBI:30616"/>
        <dbReference type="ChEBI" id="CHEBI:57540"/>
        <dbReference type="ChEBI" id="CHEBI:58349"/>
        <dbReference type="ChEBI" id="CHEBI:456216"/>
        <dbReference type="EC" id="2.7.1.23"/>
    </reaction>
</comment>
<comment type="cofactor">
    <cofactor evidence="1">
        <name>a divalent metal cation</name>
        <dbReference type="ChEBI" id="CHEBI:60240"/>
    </cofactor>
</comment>
<comment type="subcellular location">
    <subcellularLocation>
        <location evidence="1">Cytoplasm</location>
    </subcellularLocation>
</comment>
<comment type="similarity">
    <text evidence="1">Belongs to the NAD kinase family.</text>
</comment>
<comment type="sequence caution" evidence="2">
    <conflict type="erroneous initiation">
        <sequence resource="EMBL-CDS" id="AAD07009"/>
    </conflict>
    <text>Extended N-terminus.</text>
</comment>
<keyword id="KW-0067">ATP-binding</keyword>
<keyword id="KW-0963">Cytoplasm</keyword>
<keyword id="KW-0418">Kinase</keyword>
<keyword id="KW-0520">NAD</keyword>
<keyword id="KW-0521">NADP</keyword>
<keyword id="KW-0547">Nucleotide-binding</keyword>
<keyword id="KW-0808">Transferase</keyword>
<gene>
    <name evidence="1" type="primary">nadK</name>
    <name type="ordered locus">jhp_1433</name>
</gene>
<protein>
    <recommendedName>
        <fullName evidence="1">NAD kinase</fullName>
        <ecNumber evidence="1">2.7.1.23</ecNumber>
    </recommendedName>
    <alternativeName>
        <fullName evidence="1">ATP-dependent NAD kinase</fullName>
    </alternativeName>
</protein>
<sequence length="284" mass="31447">MKDLNKTIGVFVRPTHHQNALFKELEQAKEWVLTLLEDEGFESFMIDSLDGAKDAQLIKKAYAFLCLGGDGTILGALRMTHAHNKPCFGVRIGNLGFLSAVELNGLKDFLQDLKQNRIKLEEHLALEGRIGNTSFYAINEIVIAKKKALGVLDIKACAGHTPFNTYKGDGLIIATPLGSTAYNLSAHGPIVHALSQSYILTPLCDFSLTQRPLVLGAEFCLSFCAHEDALVVIDGQATYDLKANQPLYIQKSPTTTKLLQKNSRDYFKVLKEKLLWGESPNKKR</sequence>